<name>URE3_BURP6</name>
<reference key="1">
    <citation type="journal article" date="2010" name="Genome Biol. Evol.">
        <title>Continuing evolution of Burkholderia mallei through genome reduction and large-scale rearrangements.</title>
        <authorList>
            <person name="Losada L."/>
            <person name="Ronning C.M."/>
            <person name="DeShazer D."/>
            <person name="Woods D."/>
            <person name="Fedorova N."/>
            <person name="Kim H.S."/>
            <person name="Shabalina S.A."/>
            <person name="Pearson T.R."/>
            <person name="Brinkac L."/>
            <person name="Tan P."/>
            <person name="Nandi T."/>
            <person name="Crabtree J."/>
            <person name="Badger J."/>
            <person name="Beckstrom-Sternberg S."/>
            <person name="Saqib M."/>
            <person name="Schutzer S.E."/>
            <person name="Keim P."/>
            <person name="Nierman W.C."/>
        </authorList>
    </citation>
    <scope>NUCLEOTIDE SEQUENCE [LARGE SCALE GENOMIC DNA]</scope>
    <source>
        <strain>668</strain>
    </source>
</reference>
<sequence length="100" mass="11172">MKLTPREKDKLLIFTAALLAERRRARGLKLNYPETVAFITAALMEAARDGRTVAEVMHYGTTLLTRDDVMEGVPEMIPDIQVEATFPDGTKLVTVHHPIP</sequence>
<dbReference type="EC" id="3.5.1.5" evidence="1"/>
<dbReference type="EMBL" id="CP000570">
    <property type="protein sequence ID" value="ABN81453.1"/>
    <property type="molecule type" value="Genomic_DNA"/>
</dbReference>
<dbReference type="RefSeq" id="WP_004186513.1">
    <property type="nucleotide sequence ID" value="NC_009074.1"/>
</dbReference>
<dbReference type="SMR" id="A3NCL5"/>
<dbReference type="GeneID" id="93061237"/>
<dbReference type="KEGG" id="bpd:BURPS668_3074"/>
<dbReference type="HOGENOM" id="CLU_145825_1_0_4"/>
<dbReference type="UniPathway" id="UPA00258">
    <property type="reaction ID" value="UER00370"/>
</dbReference>
<dbReference type="GO" id="GO:0005737">
    <property type="term" value="C:cytoplasm"/>
    <property type="evidence" value="ECO:0007669"/>
    <property type="project" value="UniProtKB-SubCell"/>
</dbReference>
<dbReference type="GO" id="GO:0016151">
    <property type="term" value="F:nickel cation binding"/>
    <property type="evidence" value="ECO:0007669"/>
    <property type="project" value="InterPro"/>
</dbReference>
<dbReference type="GO" id="GO:0009039">
    <property type="term" value="F:urease activity"/>
    <property type="evidence" value="ECO:0007669"/>
    <property type="project" value="UniProtKB-UniRule"/>
</dbReference>
<dbReference type="GO" id="GO:0043419">
    <property type="term" value="P:urea catabolic process"/>
    <property type="evidence" value="ECO:0007669"/>
    <property type="project" value="UniProtKB-UniRule"/>
</dbReference>
<dbReference type="CDD" id="cd00390">
    <property type="entry name" value="Urease_gamma"/>
    <property type="match status" value="1"/>
</dbReference>
<dbReference type="Gene3D" id="3.30.280.10">
    <property type="entry name" value="Urease, gamma-like subunit"/>
    <property type="match status" value="1"/>
</dbReference>
<dbReference type="HAMAP" id="MF_00739">
    <property type="entry name" value="Urease_gamma"/>
    <property type="match status" value="1"/>
</dbReference>
<dbReference type="InterPro" id="IPR012010">
    <property type="entry name" value="Urease_gamma"/>
</dbReference>
<dbReference type="InterPro" id="IPR002026">
    <property type="entry name" value="Urease_gamma/gamma-beta_su"/>
</dbReference>
<dbReference type="InterPro" id="IPR036463">
    <property type="entry name" value="Urease_gamma_sf"/>
</dbReference>
<dbReference type="InterPro" id="IPR050069">
    <property type="entry name" value="Urease_subunit"/>
</dbReference>
<dbReference type="NCBIfam" id="NF009712">
    <property type="entry name" value="PRK13241.1"/>
    <property type="match status" value="1"/>
</dbReference>
<dbReference type="NCBIfam" id="TIGR00193">
    <property type="entry name" value="urease_gam"/>
    <property type="match status" value="1"/>
</dbReference>
<dbReference type="PANTHER" id="PTHR33569">
    <property type="entry name" value="UREASE"/>
    <property type="match status" value="1"/>
</dbReference>
<dbReference type="PANTHER" id="PTHR33569:SF1">
    <property type="entry name" value="UREASE"/>
    <property type="match status" value="1"/>
</dbReference>
<dbReference type="Pfam" id="PF00547">
    <property type="entry name" value="Urease_gamma"/>
    <property type="match status" value="1"/>
</dbReference>
<dbReference type="PIRSF" id="PIRSF001223">
    <property type="entry name" value="Urease_gamma"/>
    <property type="match status" value="1"/>
</dbReference>
<dbReference type="SUPFAM" id="SSF54111">
    <property type="entry name" value="Urease, gamma-subunit"/>
    <property type="match status" value="1"/>
</dbReference>
<keyword id="KW-0963">Cytoplasm</keyword>
<keyword id="KW-0378">Hydrolase</keyword>
<protein>
    <recommendedName>
        <fullName evidence="1">Urease subunit gamma</fullName>
        <ecNumber evidence="1">3.5.1.5</ecNumber>
    </recommendedName>
    <alternativeName>
        <fullName evidence="1">Urea amidohydrolase subunit gamma</fullName>
    </alternativeName>
</protein>
<comment type="catalytic activity">
    <reaction evidence="1">
        <text>urea + 2 H2O + H(+) = hydrogencarbonate + 2 NH4(+)</text>
        <dbReference type="Rhea" id="RHEA:20557"/>
        <dbReference type="ChEBI" id="CHEBI:15377"/>
        <dbReference type="ChEBI" id="CHEBI:15378"/>
        <dbReference type="ChEBI" id="CHEBI:16199"/>
        <dbReference type="ChEBI" id="CHEBI:17544"/>
        <dbReference type="ChEBI" id="CHEBI:28938"/>
        <dbReference type="EC" id="3.5.1.5"/>
    </reaction>
</comment>
<comment type="pathway">
    <text evidence="1">Nitrogen metabolism; urea degradation; CO(2) and NH(3) from urea (urease route): step 1/1.</text>
</comment>
<comment type="subunit">
    <text evidence="1">Heterotrimer of UreA (gamma), UreB (beta) and UreC (alpha) subunits. Three heterotrimers associate to form the active enzyme.</text>
</comment>
<comment type="subcellular location">
    <subcellularLocation>
        <location evidence="1">Cytoplasm</location>
    </subcellularLocation>
</comment>
<comment type="similarity">
    <text evidence="1">Belongs to the urease gamma subunit family.</text>
</comment>
<feature type="chain" id="PRO_1000046319" description="Urease subunit gamma">
    <location>
        <begin position="1"/>
        <end position="100"/>
    </location>
</feature>
<accession>A3NCL5</accession>
<organism>
    <name type="scientific">Burkholderia pseudomallei (strain 668)</name>
    <dbReference type="NCBI Taxonomy" id="320373"/>
    <lineage>
        <taxon>Bacteria</taxon>
        <taxon>Pseudomonadati</taxon>
        <taxon>Pseudomonadota</taxon>
        <taxon>Betaproteobacteria</taxon>
        <taxon>Burkholderiales</taxon>
        <taxon>Burkholderiaceae</taxon>
        <taxon>Burkholderia</taxon>
        <taxon>pseudomallei group</taxon>
    </lineage>
</organism>
<proteinExistence type="inferred from homology"/>
<gene>
    <name evidence="1" type="primary">ureA</name>
    <name type="ordered locus">BURPS668_3074</name>
</gene>
<evidence type="ECO:0000255" key="1">
    <source>
        <dbReference type="HAMAP-Rule" id="MF_00739"/>
    </source>
</evidence>